<keyword id="KW-1185">Reference proteome</keyword>
<keyword id="KW-0687">Ribonucleoprotein</keyword>
<keyword id="KW-0689">Ribosomal protein</keyword>
<keyword id="KW-0694">RNA-binding</keyword>
<keyword id="KW-0699">rRNA-binding</keyword>
<comment type="function">
    <text evidence="1">Binds to the 23S rRNA.</text>
</comment>
<comment type="subunit">
    <text evidence="1">Part of the 50S ribosomal subunit.</text>
</comment>
<comment type="similarity">
    <text evidence="1">Belongs to the universal ribosomal protein uL15 family.</text>
</comment>
<gene>
    <name evidence="1" type="primary">rplO</name>
    <name type="ordered locus">LCK_01577</name>
</gene>
<name>RL15_LEUCK</name>
<evidence type="ECO:0000255" key="1">
    <source>
        <dbReference type="HAMAP-Rule" id="MF_01341"/>
    </source>
</evidence>
<evidence type="ECO:0000256" key="2">
    <source>
        <dbReference type="SAM" id="MobiDB-lite"/>
    </source>
</evidence>
<evidence type="ECO:0000305" key="3"/>
<accession>B1MVZ6</accession>
<organism>
    <name type="scientific">Leuconostoc citreum (strain KM20)</name>
    <dbReference type="NCBI Taxonomy" id="349519"/>
    <lineage>
        <taxon>Bacteria</taxon>
        <taxon>Bacillati</taxon>
        <taxon>Bacillota</taxon>
        <taxon>Bacilli</taxon>
        <taxon>Lactobacillales</taxon>
        <taxon>Lactobacillaceae</taxon>
        <taxon>Leuconostoc</taxon>
    </lineage>
</organism>
<reference key="1">
    <citation type="journal article" date="2008" name="J. Bacteriol.">
        <title>Complete genome sequence of Leuconostoc citreum KM20.</title>
        <authorList>
            <person name="Kim J.F."/>
            <person name="Jeong H."/>
            <person name="Lee J.-S."/>
            <person name="Choi S.-H."/>
            <person name="Ha M."/>
            <person name="Hur C.-G."/>
            <person name="Kim J.-S."/>
            <person name="Lee S."/>
            <person name="Park H.-S."/>
            <person name="Park Y.-H."/>
            <person name="Oh T.K."/>
        </authorList>
    </citation>
    <scope>NUCLEOTIDE SEQUENCE [LARGE SCALE GENOMIC DNA]</scope>
    <source>
        <strain>KM20</strain>
    </source>
</reference>
<dbReference type="EMBL" id="DQ489736">
    <property type="protein sequence ID" value="ACA83400.1"/>
    <property type="molecule type" value="Genomic_DNA"/>
</dbReference>
<dbReference type="RefSeq" id="WP_004899436.1">
    <property type="nucleotide sequence ID" value="NC_010471.1"/>
</dbReference>
<dbReference type="SMR" id="B1MVZ6"/>
<dbReference type="STRING" id="349519.LCK_01577"/>
<dbReference type="GeneID" id="61103259"/>
<dbReference type="KEGG" id="lci:LCK_01577"/>
<dbReference type="eggNOG" id="COG0200">
    <property type="taxonomic scope" value="Bacteria"/>
</dbReference>
<dbReference type="HOGENOM" id="CLU_055188_4_2_9"/>
<dbReference type="OrthoDB" id="9810293at2"/>
<dbReference type="Proteomes" id="UP000002166">
    <property type="component" value="Chromosome"/>
</dbReference>
<dbReference type="GO" id="GO:0022625">
    <property type="term" value="C:cytosolic large ribosomal subunit"/>
    <property type="evidence" value="ECO:0007669"/>
    <property type="project" value="TreeGrafter"/>
</dbReference>
<dbReference type="GO" id="GO:0019843">
    <property type="term" value="F:rRNA binding"/>
    <property type="evidence" value="ECO:0007669"/>
    <property type="project" value="UniProtKB-UniRule"/>
</dbReference>
<dbReference type="GO" id="GO:0003735">
    <property type="term" value="F:structural constituent of ribosome"/>
    <property type="evidence" value="ECO:0007669"/>
    <property type="project" value="InterPro"/>
</dbReference>
<dbReference type="GO" id="GO:0006412">
    <property type="term" value="P:translation"/>
    <property type="evidence" value="ECO:0007669"/>
    <property type="project" value="UniProtKB-UniRule"/>
</dbReference>
<dbReference type="Gene3D" id="3.100.10.10">
    <property type="match status" value="1"/>
</dbReference>
<dbReference type="HAMAP" id="MF_01341">
    <property type="entry name" value="Ribosomal_uL15"/>
    <property type="match status" value="1"/>
</dbReference>
<dbReference type="InterPro" id="IPR030878">
    <property type="entry name" value="Ribosomal_uL15"/>
</dbReference>
<dbReference type="InterPro" id="IPR021131">
    <property type="entry name" value="Ribosomal_uL15/eL18"/>
</dbReference>
<dbReference type="InterPro" id="IPR036227">
    <property type="entry name" value="Ribosomal_uL15/eL18_sf"/>
</dbReference>
<dbReference type="InterPro" id="IPR005749">
    <property type="entry name" value="Ribosomal_uL15_bac-type"/>
</dbReference>
<dbReference type="InterPro" id="IPR001196">
    <property type="entry name" value="Ribosomal_uL15_CS"/>
</dbReference>
<dbReference type="NCBIfam" id="TIGR01071">
    <property type="entry name" value="rplO_bact"/>
    <property type="match status" value="1"/>
</dbReference>
<dbReference type="PANTHER" id="PTHR12934">
    <property type="entry name" value="50S RIBOSOMAL PROTEIN L15"/>
    <property type="match status" value="1"/>
</dbReference>
<dbReference type="PANTHER" id="PTHR12934:SF11">
    <property type="entry name" value="LARGE RIBOSOMAL SUBUNIT PROTEIN UL15M"/>
    <property type="match status" value="1"/>
</dbReference>
<dbReference type="Pfam" id="PF00828">
    <property type="entry name" value="Ribosomal_L27A"/>
    <property type="match status" value="1"/>
</dbReference>
<dbReference type="SUPFAM" id="SSF52080">
    <property type="entry name" value="Ribosomal proteins L15p and L18e"/>
    <property type="match status" value="1"/>
</dbReference>
<dbReference type="PROSITE" id="PS00475">
    <property type="entry name" value="RIBOSOMAL_L15"/>
    <property type="match status" value="1"/>
</dbReference>
<sequence>MNLNELQPAAGSRKLRNRVGRGTSSGNGKTSGRGQKGQKARGKVRLGFEGGQMPLYRRIPKRGFTNISRKEFAVVNLEKLNTFADGTEVTPALLIENGIVKNQKSGIKVLAVGQLEKKLTVKAHKFSGAAKAAIEQAGGTTEVL</sequence>
<protein>
    <recommendedName>
        <fullName evidence="1">Large ribosomal subunit protein uL15</fullName>
    </recommendedName>
    <alternativeName>
        <fullName evidence="3">50S ribosomal protein L15</fullName>
    </alternativeName>
</protein>
<feature type="chain" id="PRO_1000142836" description="Large ribosomal subunit protein uL15">
    <location>
        <begin position="1"/>
        <end position="144"/>
    </location>
</feature>
<feature type="region of interest" description="Disordered" evidence="2">
    <location>
        <begin position="1"/>
        <end position="44"/>
    </location>
</feature>
<feature type="compositionally biased region" description="Gly residues" evidence="2">
    <location>
        <begin position="23"/>
        <end position="35"/>
    </location>
</feature>
<proteinExistence type="inferred from homology"/>